<sequence>MGKYFGTDGVRGEANVELTPELAFQLGRFGGYVLSQHETERPKVFVARDTRISGEMLESALIAGLLSVGIEVYKLGVLATPGVSYLVRTEKASAGVMISASHNPALDNGIKFFGNDGFKLADDQELEIEALLDAPEDTLPRPSAEGLGTLVDYPEGLRKYEKFLVTTGTDLSGMTVALDTANGAASVSARDVFLDLNAEIAVIGEKPNGLNINDGVGSTHPEQLQELVKETGADLGLAFDGDSDRLIAVDETGEIVDGDRIMFIIGKYLSEKGLLAHNTIVTTVMSNLGFHKALDKQGINKAITAVGDRYVVEEMRSSGYNLGGEQSGHVIIMDYNTTGDGQLTAIQLAKVMKETGKSLSELAAEVTIYPQKLVNIRVENSMKERAMEVPAIANIIAKMEDEMAGNGRILVRPSGTEPLLRVMAEAPTDAEVDYYVDTIADVVRTEIGCDN</sequence>
<feature type="chain" id="PRO_0000147978" description="Phosphoglucosamine mutase">
    <location>
        <begin position="1"/>
        <end position="451"/>
    </location>
</feature>
<feature type="active site" description="Phosphoserine intermediate" evidence="1">
    <location>
        <position position="101"/>
    </location>
</feature>
<feature type="binding site" description="via phosphate group" evidence="1">
    <location>
        <position position="101"/>
    </location>
    <ligand>
        <name>Mg(2+)</name>
        <dbReference type="ChEBI" id="CHEBI:18420"/>
    </ligand>
</feature>
<feature type="binding site" evidence="1">
    <location>
        <position position="240"/>
    </location>
    <ligand>
        <name>Mg(2+)</name>
        <dbReference type="ChEBI" id="CHEBI:18420"/>
    </ligand>
</feature>
<feature type="binding site" evidence="1">
    <location>
        <position position="242"/>
    </location>
    <ligand>
        <name>Mg(2+)</name>
        <dbReference type="ChEBI" id="CHEBI:18420"/>
    </ligand>
</feature>
<feature type="binding site" evidence="1">
    <location>
        <position position="244"/>
    </location>
    <ligand>
        <name>Mg(2+)</name>
        <dbReference type="ChEBI" id="CHEBI:18420"/>
    </ligand>
</feature>
<feature type="modified residue" description="Phosphoserine" evidence="1">
    <location>
        <position position="101"/>
    </location>
</feature>
<keyword id="KW-0413">Isomerase</keyword>
<keyword id="KW-0460">Magnesium</keyword>
<keyword id="KW-0479">Metal-binding</keyword>
<keyword id="KW-0597">Phosphoprotein</keyword>
<proteinExistence type="inferred from homology"/>
<gene>
    <name evidence="1" type="primary">glmM</name>
    <name type="ordered locus">SpyM3_0671</name>
</gene>
<protein>
    <recommendedName>
        <fullName evidence="1">Phosphoglucosamine mutase</fullName>
        <ecNumber evidence="1">5.4.2.10</ecNumber>
    </recommendedName>
</protein>
<dbReference type="EC" id="5.4.2.10" evidence="1"/>
<dbReference type="EMBL" id="AE014074">
    <property type="protein sequence ID" value="AAM79278.1"/>
    <property type="status" value="ALT_INIT"/>
    <property type="molecule type" value="Genomic_DNA"/>
</dbReference>
<dbReference type="RefSeq" id="WP_011106808.1">
    <property type="nucleotide sequence ID" value="NC_004070.1"/>
</dbReference>
<dbReference type="SMR" id="P0DB38"/>
<dbReference type="GeneID" id="69900941"/>
<dbReference type="KEGG" id="spg:SpyM3_0671"/>
<dbReference type="HOGENOM" id="CLU_016950_7_0_9"/>
<dbReference type="Proteomes" id="UP000000564">
    <property type="component" value="Chromosome"/>
</dbReference>
<dbReference type="GO" id="GO:0005829">
    <property type="term" value="C:cytosol"/>
    <property type="evidence" value="ECO:0007669"/>
    <property type="project" value="TreeGrafter"/>
</dbReference>
<dbReference type="GO" id="GO:0000287">
    <property type="term" value="F:magnesium ion binding"/>
    <property type="evidence" value="ECO:0007669"/>
    <property type="project" value="UniProtKB-UniRule"/>
</dbReference>
<dbReference type="GO" id="GO:0008966">
    <property type="term" value="F:phosphoglucosamine mutase activity"/>
    <property type="evidence" value="ECO:0007669"/>
    <property type="project" value="UniProtKB-UniRule"/>
</dbReference>
<dbReference type="GO" id="GO:0004615">
    <property type="term" value="F:phosphomannomutase activity"/>
    <property type="evidence" value="ECO:0007669"/>
    <property type="project" value="TreeGrafter"/>
</dbReference>
<dbReference type="GO" id="GO:0005975">
    <property type="term" value="P:carbohydrate metabolic process"/>
    <property type="evidence" value="ECO:0007669"/>
    <property type="project" value="InterPro"/>
</dbReference>
<dbReference type="GO" id="GO:0009252">
    <property type="term" value="P:peptidoglycan biosynthetic process"/>
    <property type="evidence" value="ECO:0007669"/>
    <property type="project" value="TreeGrafter"/>
</dbReference>
<dbReference type="GO" id="GO:0006048">
    <property type="term" value="P:UDP-N-acetylglucosamine biosynthetic process"/>
    <property type="evidence" value="ECO:0007669"/>
    <property type="project" value="TreeGrafter"/>
</dbReference>
<dbReference type="CDD" id="cd05802">
    <property type="entry name" value="GlmM"/>
    <property type="match status" value="1"/>
</dbReference>
<dbReference type="FunFam" id="3.30.310.50:FF:000001">
    <property type="entry name" value="Phosphoglucosamine mutase"/>
    <property type="match status" value="1"/>
</dbReference>
<dbReference type="FunFam" id="3.40.120.10:FF:000001">
    <property type="entry name" value="Phosphoglucosamine mutase"/>
    <property type="match status" value="1"/>
</dbReference>
<dbReference type="FunFam" id="3.40.120.10:FF:000002">
    <property type="entry name" value="Phosphoglucosamine mutase"/>
    <property type="match status" value="1"/>
</dbReference>
<dbReference type="Gene3D" id="3.40.120.10">
    <property type="entry name" value="Alpha-D-Glucose-1,6-Bisphosphate, subunit A, domain 3"/>
    <property type="match status" value="3"/>
</dbReference>
<dbReference type="Gene3D" id="3.30.310.50">
    <property type="entry name" value="Alpha-D-phosphohexomutase, C-terminal domain"/>
    <property type="match status" value="1"/>
</dbReference>
<dbReference type="HAMAP" id="MF_01554_B">
    <property type="entry name" value="GlmM_B"/>
    <property type="match status" value="1"/>
</dbReference>
<dbReference type="InterPro" id="IPR005844">
    <property type="entry name" value="A-D-PHexomutase_a/b/a-I"/>
</dbReference>
<dbReference type="InterPro" id="IPR016055">
    <property type="entry name" value="A-D-PHexomutase_a/b/a-I/II/III"/>
</dbReference>
<dbReference type="InterPro" id="IPR005845">
    <property type="entry name" value="A-D-PHexomutase_a/b/a-II"/>
</dbReference>
<dbReference type="InterPro" id="IPR005846">
    <property type="entry name" value="A-D-PHexomutase_a/b/a-III"/>
</dbReference>
<dbReference type="InterPro" id="IPR005843">
    <property type="entry name" value="A-D-PHexomutase_C"/>
</dbReference>
<dbReference type="InterPro" id="IPR036900">
    <property type="entry name" value="A-D-PHexomutase_C_sf"/>
</dbReference>
<dbReference type="InterPro" id="IPR016066">
    <property type="entry name" value="A-D-PHexomutase_CS"/>
</dbReference>
<dbReference type="InterPro" id="IPR005841">
    <property type="entry name" value="Alpha-D-phosphohexomutase_SF"/>
</dbReference>
<dbReference type="InterPro" id="IPR006352">
    <property type="entry name" value="GlmM_bact"/>
</dbReference>
<dbReference type="InterPro" id="IPR050060">
    <property type="entry name" value="Phosphoglucosamine_mutase"/>
</dbReference>
<dbReference type="NCBIfam" id="TIGR01455">
    <property type="entry name" value="glmM"/>
    <property type="match status" value="1"/>
</dbReference>
<dbReference type="PANTHER" id="PTHR42946:SF1">
    <property type="entry name" value="PHOSPHOGLUCOMUTASE (ALPHA-D-GLUCOSE-1,6-BISPHOSPHATE-DEPENDENT)"/>
    <property type="match status" value="1"/>
</dbReference>
<dbReference type="PANTHER" id="PTHR42946">
    <property type="entry name" value="PHOSPHOHEXOSE MUTASE"/>
    <property type="match status" value="1"/>
</dbReference>
<dbReference type="Pfam" id="PF02878">
    <property type="entry name" value="PGM_PMM_I"/>
    <property type="match status" value="1"/>
</dbReference>
<dbReference type="Pfam" id="PF02879">
    <property type="entry name" value="PGM_PMM_II"/>
    <property type="match status" value="1"/>
</dbReference>
<dbReference type="Pfam" id="PF02880">
    <property type="entry name" value="PGM_PMM_III"/>
    <property type="match status" value="1"/>
</dbReference>
<dbReference type="Pfam" id="PF00408">
    <property type="entry name" value="PGM_PMM_IV"/>
    <property type="match status" value="1"/>
</dbReference>
<dbReference type="PRINTS" id="PR00509">
    <property type="entry name" value="PGMPMM"/>
</dbReference>
<dbReference type="SUPFAM" id="SSF55957">
    <property type="entry name" value="Phosphoglucomutase, C-terminal domain"/>
    <property type="match status" value="1"/>
</dbReference>
<dbReference type="SUPFAM" id="SSF53738">
    <property type="entry name" value="Phosphoglucomutase, first 3 domains"/>
    <property type="match status" value="3"/>
</dbReference>
<dbReference type="PROSITE" id="PS00710">
    <property type="entry name" value="PGM_PMM"/>
    <property type="match status" value="1"/>
</dbReference>
<reference key="1">
    <citation type="journal article" date="2002" name="Proc. Natl. Acad. Sci. U.S.A.">
        <title>Genome sequence of a serotype M3 strain of group A Streptococcus: phage-encoded toxins, the high-virulence phenotype, and clone emergence.</title>
        <authorList>
            <person name="Beres S.B."/>
            <person name="Sylva G.L."/>
            <person name="Barbian K.D."/>
            <person name="Lei B."/>
            <person name="Hoff J.S."/>
            <person name="Mammarella N.D."/>
            <person name="Liu M.-Y."/>
            <person name="Smoot J.C."/>
            <person name="Porcella S.F."/>
            <person name="Parkins L.D."/>
            <person name="Campbell D.S."/>
            <person name="Smith T.M."/>
            <person name="McCormick J.K."/>
            <person name="Leung D.Y.M."/>
            <person name="Schlievert P.M."/>
            <person name="Musser J.M."/>
        </authorList>
    </citation>
    <scope>NUCLEOTIDE SEQUENCE [LARGE SCALE GENOMIC DNA]</scope>
    <source>
        <strain>ATCC BAA-595 / MGAS315</strain>
    </source>
</reference>
<accession>P0DB38</accession>
<accession>Q878L0</accession>
<accession>Q8K7R7</accession>
<evidence type="ECO:0000255" key="1">
    <source>
        <dbReference type="HAMAP-Rule" id="MF_01554"/>
    </source>
</evidence>
<evidence type="ECO:0000305" key="2"/>
<organism>
    <name type="scientific">Streptococcus pyogenes serotype M3 (strain ATCC BAA-595 / MGAS315)</name>
    <dbReference type="NCBI Taxonomy" id="198466"/>
    <lineage>
        <taxon>Bacteria</taxon>
        <taxon>Bacillati</taxon>
        <taxon>Bacillota</taxon>
        <taxon>Bacilli</taxon>
        <taxon>Lactobacillales</taxon>
        <taxon>Streptococcaceae</taxon>
        <taxon>Streptococcus</taxon>
    </lineage>
</organism>
<comment type="function">
    <text evidence="1">Catalyzes the conversion of glucosamine-6-phosphate to glucosamine-1-phosphate.</text>
</comment>
<comment type="catalytic activity">
    <reaction evidence="1">
        <text>alpha-D-glucosamine 1-phosphate = D-glucosamine 6-phosphate</text>
        <dbReference type="Rhea" id="RHEA:23424"/>
        <dbReference type="ChEBI" id="CHEBI:58516"/>
        <dbReference type="ChEBI" id="CHEBI:58725"/>
        <dbReference type="EC" id="5.4.2.10"/>
    </reaction>
</comment>
<comment type="cofactor">
    <cofactor evidence="1">
        <name>Mg(2+)</name>
        <dbReference type="ChEBI" id="CHEBI:18420"/>
    </cofactor>
    <text evidence="1">Binds 1 Mg(2+) ion per subunit.</text>
</comment>
<comment type="PTM">
    <text evidence="1">Activated by phosphorylation.</text>
</comment>
<comment type="similarity">
    <text evidence="1">Belongs to the phosphohexose mutase family.</text>
</comment>
<comment type="sequence caution" evidence="2">
    <conflict type="erroneous initiation">
        <sequence resource="EMBL-CDS" id="AAM79278"/>
    </conflict>
</comment>
<name>GLMM_STRP3</name>